<comment type="function">
    <text evidence="1">Pectinolytic enzymes consist of four classes of enzymes: pectin lyase, polygalacturonase, pectin methylesterase and rhamnogalacturonase. Among pectinolytic enzymes, pectin lyase is the most important in depolymerization of pectin, since it cleaves internal glycosidic bonds of highly methylated pectins (By similarity).</text>
</comment>
<comment type="catalytic activity">
    <reaction>
        <text>Eliminative cleavage of (1-&gt;4)-alpha-D-galacturonan methyl ester to give oligosaccharides with 4-deoxy-6-O-methyl-alpha-D-galact-4-enuronosyl groups at their non-reducing ends.</text>
        <dbReference type="EC" id="4.2.2.10"/>
    </reaction>
</comment>
<comment type="subcellular location">
    <subcellularLocation>
        <location evidence="1">Secreted</location>
    </subcellularLocation>
</comment>
<comment type="similarity">
    <text evidence="4">Belongs to the polysaccharide lyase 1 family.</text>
</comment>
<evidence type="ECO:0000250" key="1"/>
<evidence type="ECO:0000255" key="2"/>
<evidence type="ECO:0000256" key="3">
    <source>
        <dbReference type="SAM" id="MobiDB-lite"/>
    </source>
</evidence>
<evidence type="ECO:0000305" key="4"/>
<accession>A2R6A1</accession>
<organism>
    <name type="scientific">Aspergillus niger (strain ATCC MYA-4892 / CBS 513.88 / FGSC A1513)</name>
    <dbReference type="NCBI Taxonomy" id="425011"/>
    <lineage>
        <taxon>Eukaryota</taxon>
        <taxon>Fungi</taxon>
        <taxon>Dikarya</taxon>
        <taxon>Ascomycota</taxon>
        <taxon>Pezizomycotina</taxon>
        <taxon>Eurotiomycetes</taxon>
        <taxon>Eurotiomycetidae</taxon>
        <taxon>Eurotiales</taxon>
        <taxon>Aspergillaceae</taxon>
        <taxon>Aspergillus</taxon>
        <taxon>Aspergillus subgen. Circumdati</taxon>
    </lineage>
</organism>
<feature type="signal peptide" evidence="2">
    <location>
        <begin position="1"/>
        <end position="20"/>
    </location>
</feature>
<feature type="chain" id="PRO_5000221090" description="Probable pectin lyase F">
    <location>
        <begin position="21"/>
        <end position="476"/>
    </location>
</feature>
<feature type="region of interest" description="Disordered" evidence="3">
    <location>
        <begin position="412"/>
        <end position="476"/>
    </location>
</feature>
<feature type="compositionally biased region" description="Polar residues" evidence="3">
    <location>
        <begin position="426"/>
        <end position="453"/>
    </location>
</feature>
<feature type="compositionally biased region" description="Basic residues" evidence="3">
    <location>
        <begin position="465"/>
        <end position="476"/>
    </location>
</feature>
<feature type="active site" evidence="2">
    <location>
        <position position="258"/>
    </location>
</feature>
<feature type="glycosylation site" description="N-linked (GlcNAc...) asparagine" evidence="2">
    <location>
        <position position="103"/>
    </location>
</feature>
<feature type="glycosylation site" description="N-linked (GlcNAc...) asparagine" evidence="2">
    <location>
        <position position="131"/>
    </location>
</feature>
<feature type="glycosylation site" description="N-linked (GlcNAc...) asparagine" evidence="2">
    <location>
        <position position="277"/>
    </location>
</feature>
<feature type="glycosylation site" description="N-linked (GlcNAc...) asparagine" evidence="2">
    <location>
        <position position="318"/>
    </location>
</feature>
<feature type="glycosylation site" description="N-linked (GlcNAc...) asparagine" evidence="2">
    <location>
        <position position="385"/>
    </location>
</feature>
<feature type="disulfide bond" evidence="1">
    <location>
        <begin position="84"/>
        <end position="108"/>
    </location>
</feature>
<feature type="disulfide bond" evidence="1">
    <location>
        <begin position="325"/>
        <end position="333"/>
    </location>
</feature>
<dbReference type="EC" id="4.2.2.10"/>
<dbReference type="EMBL" id="AM270351">
    <property type="protein sequence ID" value="CAK48551.1"/>
    <property type="molecule type" value="Genomic_DNA"/>
</dbReference>
<dbReference type="RefSeq" id="XP_001397243.1">
    <property type="nucleotide sequence ID" value="XM_001397206.2"/>
</dbReference>
<dbReference type="SMR" id="A2R6A1"/>
<dbReference type="CAZy" id="PL1">
    <property type="family name" value="Polysaccharide Lyase Family 1"/>
</dbReference>
<dbReference type="GlyCosmos" id="A2R6A1">
    <property type="glycosylation" value="5 sites, No reported glycans"/>
</dbReference>
<dbReference type="EnsemblFungi" id="CAK48551">
    <property type="protein sequence ID" value="CAK48551"/>
    <property type="gene ID" value="An15g07160"/>
</dbReference>
<dbReference type="GeneID" id="4988317"/>
<dbReference type="KEGG" id="ang:An15g07160"/>
<dbReference type="VEuPathDB" id="FungiDB:An15g07160"/>
<dbReference type="HOGENOM" id="CLU_021980_0_1_1"/>
<dbReference type="Proteomes" id="UP000006706">
    <property type="component" value="Chromosome 3R"/>
</dbReference>
<dbReference type="GO" id="GO:0005576">
    <property type="term" value="C:extracellular region"/>
    <property type="evidence" value="ECO:0007669"/>
    <property type="project" value="UniProtKB-SubCell"/>
</dbReference>
<dbReference type="GO" id="GO:0030570">
    <property type="term" value="F:pectate lyase activity"/>
    <property type="evidence" value="ECO:0007669"/>
    <property type="project" value="InterPro"/>
</dbReference>
<dbReference type="GO" id="GO:0047490">
    <property type="term" value="F:pectin lyase activity"/>
    <property type="evidence" value="ECO:0000250"/>
    <property type="project" value="UniProtKB"/>
</dbReference>
<dbReference type="GO" id="GO:0071555">
    <property type="term" value="P:cell wall organization"/>
    <property type="evidence" value="ECO:0007669"/>
    <property type="project" value="UniProtKB-KW"/>
</dbReference>
<dbReference type="GO" id="GO:0045490">
    <property type="term" value="P:pectin catabolic process"/>
    <property type="evidence" value="ECO:0000250"/>
    <property type="project" value="UniProtKB"/>
</dbReference>
<dbReference type="FunFam" id="2.160.20.10:FF:000003">
    <property type="entry name" value="Pectin lyase F"/>
    <property type="match status" value="1"/>
</dbReference>
<dbReference type="Gene3D" id="2.160.20.10">
    <property type="entry name" value="Single-stranded right-handed beta-helix, Pectin lyase-like"/>
    <property type="match status" value="1"/>
</dbReference>
<dbReference type="InterPro" id="IPR002022">
    <property type="entry name" value="Pec_lyase"/>
</dbReference>
<dbReference type="InterPro" id="IPR012334">
    <property type="entry name" value="Pectin_lyas_fold"/>
</dbReference>
<dbReference type="InterPro" id="IPR011050">
    <property type="entry name" value="Pectin_lyase_fold/virulence"/>
</dbReference>
<dbReference type="InterPro" id="IPR045032">
    <property type="entry name" value="PEL"/>
</dbReference>
<dbReference type="PANTHER" id="PTHR31683">
    <property type="entry name" value="PECTATE LYASE 18-RELATED"/>
    <property type="match status" value="1"/>
</dbReference>
<dbReference type="PANTHER" id="PTHR31683:SF67">
    <property type="entry name" value="PECTIN LYASE F-RELATED"/>
    <property type="match status" value="1"/>
</dbReference>
<dbReference type="Pfam" id="PF00544">
    <property type="entry name" value="Pectate_lyase_4"/>
    <property type="match status" value="1"/>
</dbReference>
<dbReference type="SMART" id="SM00656">
    <property type="entry name" value="Amb_all"/>
    <property type="match status" value="1"/>
</dbReference>
<dbReference type="SUPFAM" id="SSF51126">
    <property type="entry name" value="Pectin lyase-like"/>
    <property type="match status" value="1"/>
</dbReference>
<gene>
    <name type="primary">pelF</name>
    <name type="ORF">An15g07160</name>
</gene>
<reference key="1">
    <citation type="journal article" date="2007" name="Nat. Biotechnol.">
        <title>Genome sequencing and analysis of the versatile cell factory Aspergillus niger CBS 513.88.</title>
        <authorList>
            <person name="Pel H.J."/>
            <person name="de Winde J.H."/>
            <person name="Archer D.B."/>
            <person name="Dyer P.S."/>
            <person name="Hofmann G."/>
            <person name="Schaap P.J."/>
            <person name="Turner G."/>
            <person name="de Vries R.P."/>
            <person name="Albang R."/>
            <person name="Albermann K."/>
            <person name="Andersen M.R."/>
            <person name="Bendtsen J.D."/>
            <person name="Benen J.A.E."/>
            <person name="van den Berg M."/>
            <person name="Breestraat S."/>
            <person name="Caddick M.X."/>
            <person name="Contreras R."/>
            <person name="Cornell M."/>
            <person name="Coutinho P.M."/>
            <person name="Danchin E.G.J."/>
            <person name="Debets A.J.M."/>
            <person name="Dekker P."/>
            <person name="van Dijck P.W.M."/>
            <person name="van Dijk A."/>
            <person name="Dijkhuizen L."/>
            <person name="Driessen A.J.M."/>
            <person name="d'Enfert C."/>
            <person name="Geysens S."/>
            <person name="Goosen C."/>
            <person name="Groot G.S.P."/>
            <person name="de Groot P.W.J."/>
            <person name="Guillemette T."/>
            <person name="Henrissat B."/>
            <person name="Herweijer M."/>
            <person name="van den Hombergh J.P.T.W."/>
            <person name="van den Hondel C.A.M.J.J."/>
            <person name="van der Heijden R.T.J.M."/>
            <person name="van der Kaaij R.M."/>
            <person name="Klis F.M."/>
            <person name="Kools H.J."/>
            <person name="Kubicek C.P."/>
            <person name="van Kuyk P.A."/>
            <person name="Lauber J."/>
            <person name="Lu X."/>
            <person name="van der Maarel M.J.E.C."/>
            <person name="Meulenberg R."/>
            <person name="Menke H."/>
            <person name="Mortimer M.A."/>
            <person name="Nielsen J."/>
            <person name="Oliver S.G."/>
            <person name="Olsthoorn M."/>
            <person name="Pal K."/>
            <person name="van Peij N.N.M.E."/>
            <person name="Ram A.F.J."/>
            <person name="Rinas U."/>
            <person name="Roubos J.A."/>
            <person name="Sagt C.M.J."/>
            <person name="Schmoll M."/>
            <person name="Sun J."/>
            <person name="Ussery D."/>
            <person name="Varga J."/>
            <person name="Vervecken W."/>
            <person name="van de Vondervoort P.J.J."/>
            <person name="Wedler H."/>
            <person name="Woesten H.A.B."/>
            <person name="Zeng A.-P."/>
            <person name="van Ooyen A.J.J."/>
            <person name="Visser J."/>
            <person name="Stam H."/>
        </authorList>
    </citation>
    <scope>NUCLEOTIDE SEQUENCE [LARGE SCALE GENOMIC DNA]</scope>
    <source>
        <strain>ATCC MYA-4892 / CBS 513.88 / FGSC A1513</strain>
    </source>
</reference>
<keyword id="KW-0119">Carbohydrate metabolism</keyword>
<keyword id="KW-0961">Cell wall biogenesis/degradation</keyword>
<keyword id="KW-1015">Disulfide bond</keyword>
<keyword id="KW-0325">Glycoprotein</keyword>
<keyword id="KW-0456">Lyase</keyword>
<keyword id="KW-0624">Polysaccharide degradation</keyword>
<keyword id="KW-1185">Reference proteome</keyword>
<keyword id="KW-0964">Secreted</keyword>
<keyword id="KW-0732">Signal</keyword>
<name>PELF_ASPNC</name>
<proteinExistence type="inferred from homology"/>
<sequence length="476" mass="49455">MTLLRHLLTATALLGASVQAAQGVTGSPFGFASGTTGGGDATPAAPSDISQLKTWLSDSTPRVILIDKEFNFLGSEGKCTNCECCKPASNTCGSSGQNAVKQNGSDWCGSYPTLTCTYDNAGIEGLEVASNKSIVGVGSSGVLRGKGLRLVNGVSNIIIQNIHITELNPEFIWGGDAITLDGTNNVWIDHVKINLIGRQMFVAGYEASHSVTISNSEFDGETSWSATCDGHHYWTVLGYGHNDKITFANNYIHHTSGRSPKLEFNSFWHAYNNYWYNNTGHAFDVGKNTRALIEGNVMVQVDTPLLADSNPGAVFAVNTSDVSTCTSTLGRTCVPNTLISSGTLSGSDSSVISSWPSGESDVTVMAASKVASYVKANAGIGKLGNGSGSSSTVGAAATSAVAKRADSDDAPFVPAYSEAGPGASAVPTQPSWSWRTVTNGPAPTGAPSDSPSAPQGLGAPVQASNKHHHQGHGRGY</sequence>
<protein>
    <recommendedName>
        <fullName>Probable pectin lyase F</fullName>
        <shortName>PLF</shortName>
        <ecNumber>4.2.2.10</ecNumber>
    </recommendedName>
</protein>